<gene>
    <name type="ordered locus">Ent638_2839</name>
</gene>
<accession>A4WCS4</accession>
<comment type="subcellular location">
    <subcellularLocation>
        <location evidence="1">Cell inner membrane</location>
        <topology evidence="1">Multi-pass membrane protein</topology>
    </subcellularLocation>
</comment>
<comment type="similarity">
    <text evidence="1">Belongs to the UPF0208 family.</text>
</comment>
<evidence type="ECO:0000255" key="1">
    <source>
        <dbReference type="HAMAP-Rule" id="MF_01101"/>
    </source>
</evidence>
<protein>
    <recommendedName>
        <fullName evidence="1">UPF0208 membrane protein Ent638_2839</fullName>
    </recommendedName>
</protein>
<feature type="chain" id="PRO_1000064972" description="UPF0208 membrane protein Ent638_2839">
    <location>
        <begin position="1"/>
        <end position="151"/>
    </location>
</feature>
<feature type="transmembrane region" description="Helical" evidence="1">
    <location>
        <begin position="46"/>
        <end position="65"/>
    </location>
</feature>
<feature type="transmembrane region" description="Helical" evidence="1">
    <location>
        <begin position="69"/>
        <end position="91"/>
    </location>
</feature>
<proteinExistence type="inferred from homology"/>
<keyword id="KW-0997">Cell inner membrane</keyword>
<keyword id="KW-1003">Cell membrane</keyword>
<keyword id="KW-0472">Membrane</keyword>
<keyword id="KW-0812">Transmembrane</keyword>
<keyword id="KW-1133">Transmembrane helix</keyword>
<reference key="1">
    <citation type="journal article" date="2010" name="PLoS Genet.">
        <title>Genome sequence of the plant growth promoting endophytic bacterium Enterobacter sp. 638.</title>
        <authorList>
            <person name="Taghavi S."/>
            <person name="van der Lelie D."/>
            <person name="Hoffman A."/>
            <person name="Zhang Y.B."/>
            <person name="Walla M.D."/>
            <person name="Vangronsveld J."/>
            <person name="Newman L."/>
            <person name="Monchy S."/>
        </authorList>
    </citation>
    <scope>NUCLEOTIDE SEQUENCE [LARGE SCALE GENOMIC DNA]</scope>
    <source>
        <strain>638</strain>
    </source>
</reference>
<organism>
    <name type="scientific">Enterobacter sp. (strain 638)</name>
    <dbReference type="NCBI Taxonomy" id="399742"/>
    <lineage>
        <taxon>Bacteria</taxon>
        <taxon>Pseudomonadati</taxon>
        <taxon>Pseudomonadota</taxon>
        <taxon>Gammaproteobacteria</taxon>
        <taxon>Enterobacterales</taxon>
        <taxon>Enterobacteriaceae</taxon>
        <taxon>Enterobacter</taxon>
    </lineage>
</organism>
<name>Y2839_ENT38</name>
<sequence length="151" mass="17083">MSTPENPSVSFFSLFRRGQLYAKTWPLEKRLAPVFVDNRVIRITRYAIRFMPPIAVFTLCWQIALGGQLGPAVATALFALSLPMQGLWWLGKRSVTPLPPTILNWFYEVRGKLQEAGQALAPVEGKPDYQALADTLKRAFKQLDKTFLDDL</sequence>
<dbReference type="EMBL" id="CP000653">
    <property type="protein sequence ID" value="ABP61504.1"/>
    <property type="molecule type" value="Genomic_DNA"/>
</dbReference>
<dbReference type="RefSeq" id="WP_015959837.1">
    <property type="nucleotide sequence ID" value="NC_009436.1"/>
</dbReference>
<dbReference type="STRING" id="399742.Ent638_2839"/>
<dbReference type="KEGG" id="ent:Ent638_2839"/>
<dbReference type="eggNOG" id="COG3092">
    <property type="taxonomic scope" value="Bacteria"/>
</dbReference>
<dbReference type="HOGENOM" id="CLU_128746_0_0_6"/>
<dbReference type="OrthoDB" id="7066670at2"/>
<dbReference type="Proteomes" id="UP000000230">
    <property type="component" value="Chromosome"/>
</dbReference>
<dbReference type="GO" id="GO:0005886">
    <property type="term" value="C:plasma membrane"/>
    <property type="evidence" value="ECO:0007669"/>
    <property type="project" value="UniProtKB-SubCell"/>
</dbReference>
<dbReference type="HAMAP" id="MF_01101">
    <property type="entry name" value="UPF0208"/>
    <property type="match status" value="1"/>
</dbReference>
<dbReference type="InterPro" id="IPR007334">
    <property type="entry name" value="UPF0208"/>
</dbReference>
<dbReference type="NCBIfam" id="NF002493">
    <property type="entry name" value="PRK01816.1"/>
    <property type="match status" value="1"/>
</dbReference>
<dbReference type="Pfam" id="PF04217">
    <property type="entry name" value="DUF412"/>
    <property type="match status" value="1"/>
</dbReference>